<name>KSG5_ARATH</name>
<feature type="initiator methionine" description="Removed" evidence="2">
    <location>
        <position position="1"/>
    </location>
</feature>
<feature type="chain" id="PRO_0000086220" description="Shaggy-related protein kinase epsilon">
    <location>
        <begin position="2"/>
        <end position="410"/>
    </location>
</feature>
<feature type="domain" description="Protein kinase" evidence="4">
    <location>
        <begin position="74"/>
        <end position="358"/>
    </location>
</feature>
<feature type="active site" description="Proton acceptor" evidence="4 5">
    <location>
        <position position="199"/>
    </location>
</feature>
<feature type="binding site" evidence="4">
    <location>
        <begin position="80"/>
        <end position="88"/>
    </location>
    <ligand>
        <name>ATP</name>
        <dbReference type="ChEBI" id="CHEBI:30616"/>
    </ligand>
</feature>
<feature type="binding site" evidence="4">
    <location>
        <position position="103"/>
    </location>
    <ligand>
        <name>ATP</name>
        <dbReference type="ChEBI" id="CHEBI:30616"/>
    </ligand>
</feature>
<feature type="modified residue" description="N-acetylalanine" evidence="2">
    <location>
        <position position="2"/>
    </location>
</feature>
<feature type="modified residue" description="Phosphotyrosine" evidence="3">
    <location>
        <position position="234"/>
    </location>
</feature>
<evidence type="ECO:0000250" key="1"/>
<evidence type="ECO:0000250" key="2">
    <source>
        <dbReference type="UniProtKB" id="P43288"/>
    </source>
</evidence>
<evidence type="ECO:0000250" key="3">
    <source>
        <dbReference type="UniProtKB" id="Q39011"/>
    </source>
</evidence>
<evidence type="ECO:0000255" key="4">
    <source>
        <dbReference type="PROSITE-ProRule" id="PRU00159"/>
    </source>
</evidence>
<evidence type="ECO:0000255" key="5">
    <source>
        <dbReference type="PROSITE-ProRule" id="PRU10027"/>
    </source>
</evidence>
<evidence type="ECO:0000269" key="6">
    <source>
    </source>
</evidence>
<evidence type="ECO:0000303" key="7">
    <source>
    </source>
</evidence>
<evidence type="ECO:0000305" key="8"/>
<evidence type="ECO:0000312" key="9">
    <source>
        <dbReference type="Araport" id="AT5G14640"/>
    </source>
</evidence>
<evidence type="ECO:0000312" key="10">
    <source>
        <dbReference type="EMBL" id="CAB87631.1"/>
    </source>
</evidence>
<keyword id="KW-0007">Acetylation</keyword>
<keyword id="KW-0067">ATP-binding</keyword>
<keyword id="KW-0418">Kinase</keyword>
<keyword id="KW-0547">Nucleotide-binding</keyword>
<keyword id="KW-0597">Phosphoprotein</keyword>
<keyword id="KW-1185">Reference proteome</keyword>
<keyword id="KW-0723">Serine/threonine-protein kinase</keyword>
<keyword id="KW-0808">Transferase</keyword>
<dbReference type="EC" id="2.7.11.1"/>
<dbReference type="EMBL" id="AL163792">
    <property type="protein sequence ID" value="CAB87631.1"/>
    <property type="status" value="ALT_SEQ"/>
    <property type="molecule type" value="Genomic_DNA"/>
</dbReference>
<dbReference type="EMBL" id="CP002688">
    <property type="protein sequence ID" value="AED92057.1"/>
    <property type="molecule type" value="Genomic_DNA"/>
</dbReference>
<dbReference type="EMBL" id="CP002688">
    <property type="protein sequence ID" value="ANM68202.1"/>
    <property type="molecule type" value="Genomic_DNA"/>
</dbReference>
<dbReference type="EMBL" id="AY065043">
    <property type="protein sequence ID" value="AAL57679.1"/>
    <property type="molecule type" value="mRNA"/>
</dbReference>
<dbReference type="EMBL" id="BT010466">
    <property type="protein sequence ID" value="AAQ65089.1"/>
    <property type="molecule type" value="mRNA"/>
</dbReference>
<dbReference type="PIR" id="T48637">
    <property type="entry name" value="T48637"/>
</dbReference>
<dbReference type="RefSeq" id="NP_001329975.1">
    <property type="nucleotide sequence ID" value="NM_001343350.1"/>
</dbReference>
<dbReference type="RefSeq" id="NP_196968.2">
    <property type="nucleotide sequence ID" value="NM_121468.4"/>
</dbReference>
<dbReference type="SMR" id="Q8VZD5"/>
<dbReference type="BioGRID" id="16593">
    <property type="interactions" value="1"/>
</dbReference>
<dbReference type="FunCoup" id="Q8VZD5">
    <property type="interactions" value="2781"/>
</dbReference>
<dbReference type="IntAct" id="Q8VZD5">
    <property type="interactions" value="1"/>
</dbReference>
<dbReference type="STRING" id="3702.Q8VZD5"/>
<dbReference type="iPTMnet" id="Q8VZD5"/>
<dbReference type="PaxDb" id="3702-AT5G14640.1"/>
<dbReference type="ProteomicsDB" id="237111"/>
<dbReference type="EnsemblPlants" id="AT5G14640.1">
    <property type="protein sequence ID" value="AT5G14640.1"/>
    <property type="gene ID" value="AT5G14640"/>
</dbReference>
<dbReference type="EnsemblPlants" id="AT5G14640.2">
    <property type="protein sequence ID" value="AT5G14640.2"/>
    <property type="gene ID" value="AT5G14640"/>
</dbReference>
<dbReference type="GeneID" id="831316"/>
<dbReference type="Gramene" id="AT5G14640.1">
    <property type="protein sequence ID" value="AT5G14640.1"/>
    <property type="gene ID" value="AT5G14640"/>
</dbReference>
<dbReference type="Gramene" id="AT5G14640.2">
    <property type="protein sequence ID" value="AT5G14640.2"/>
    <property type="gene ID" value="AT5G14640"/>
</dbReference>
<dbReference type="KEGG" id="ath:AT5G14640"/>
<dbReference type="Araport" id="AT5G14640"/>
<dbReference type="TAIR" id="AT5G14640">
    <property type="gene designation" value="SK13"/>
</dbReference>
<dbReference type="eggNOG" id="KOG0658">
    <property type="taxonomic scope" value="Eukaryota"/>
</dbReference>
<dbReference type="HOGENOM" id="CLU_000288_181_20_1"/>
<dbReference type="InParanoid" id="Q8VZD5"/>
<dbReference type="OMA" id="KMNDSVC"/>
<dbReference type="PhylomeDB" id="Q8VZD5"/>
<dbReference type="PRO" id="PR:Q8VZD5"/>
<dbReference type="Proteomes" id="UP000006548">
    <property type="component" value="Chromosome 5"/>
</dbReference>
<dbReference type="ExpressionAtlas" id="Q8VZD5">
    <property type="expression patterns" value="baseline and differential"/>
</dbReference>
<dbReference type="GO" id="GO:0005524">
    <property type="term" value="F:ATP binding"/>
    <property type="evidence" value="ECO:0007669"/>
    <property type="project" value="UniProtKB-KW"/>
</dbReference>
<dbReference type="GO" id="GO:0106310">
    <property type="term" value="F:protein serine kinase activity"/>
    <property type="evidence" value="ECO:0007669"/>
    <property type="project" value="RHEA"/>
</dbReference>
<dbReference type="GO" id="GO:0004674">
    <property type="term" value="F:protein serine/threonine kinase activity"/>
    <property type="evidence" value="ECO:0007005"/>
    <property type="project" value="TAIR"/>
</dbReference>
<dbReference type="GO" id="GO:0006972">
    <property type="term" value="P:hyperosmotic response"/>
    <property type="evidence" value="ECO:0000270"/>
    <property type="project" value="TAIR"/>
</dbReference>
<dbReference type="GO" id="GO:0046777">
    <property type="term" value="P:protein autophosphorylation"/>
    <property type="evidence" value="ECO:0007005"/>
    <property type="project" value="TAIR"/>
</dbReference>
<dbReference type="GO" id="GO:0009651">
    <property type="term" value="P:response to salt stress"/>
    <property type="evidence" value="ECO:0000270"/>
    <property type="project" value="TAIR"/>
</dbReference>
<dbReference type="CDD" id="cd14137">
    <property type="entry name" value="STKc_GSK3"/>
    <property type="match status" value="1"/>
</dbReference>
<dbReference type="FunFam" id="3.30.200.20:FF:000009">
    <property type="entry name" value="Glycogen synthase kinase-3 beta"/>
    <property type="match status" value="1"/>
</dbReference>
<dbReference type="FunFam" id="1.10.510.10:FF:000082">
    <property type="entry name" value="Shaggy-related protein kinase kappa"/>
    <property type="match status" value="1"/>
</dbReference>
<dbReference type="Gene3D" id="3.30.200.20">
    <property type="entry name" value="Phosphorylase Kinase, domain 1"/>
    <property type="match status" value="1"/>
</dbReference>
<dbReference type="Gene3D" id="1.10.510.10">
    <property type="entry name" value="Transferase(Phosphotransferase) domain 1"/>
    <property type="match status" value="1"/>
</dbReference>
<dbReference type="InterPro" id="IPR050591">
    <property type="entry name" value="GSK-3"/>
</dbReference>
<dbReference type="InterPro" id="IPR011009">
    <property type="entry name" value="Kinase-like_dom_sf"/>
</dbReference>
<dbReference type="InterPro" id="IPR000719">
    <property type="entry name" value="Prot_kinase_dom"/>
</dbReference>
<dbReference type="InterPro" id="IPR017441">
    <property type="entry name" value="Protein_kinase_ATP_BS"/>
</dbReference>
<dbReference type="InterPro" id="IPR008271">
    <property type="entry name" value="Ser/Thr_kinase_AS"/>
</dbReference>
<dbReference type="InterPro" id="IPR039192">
    <property type="entry name" value="STKc_GSK3"/>
</dbReference>
<dbReference type="PANTHER" id="PTHR24057">
    <property type="entry name" value="GLYCOGEN SYNTHASE KINASE-3 ALPHA"/>
    <property type="match status" value="1"/>
</dbReference>
<dbReference type="PANTHER" id="PTHR24057:SF36">
    <property type="entry name" value="SHAGGY-RELATED PROTEIN KINASE EPSILON"/>
    <property type="match status" value="1"/>
</dbReference>
<dbReference type="Pfam" id="PF00069">
    <property type="entry name" value="Pkinase"/>
    <property type="match status" value="1"/>
</dbReference>
<dbReference type="SMART" id="SM00220">
    <property type="entry name" value="S_TKc"/>
    <property type="match status" value="1"/>
</dbReference>
<dbReference type="SUPFAM" id="SSF56112">
    <property type="entry name" value="Protein kinase-like (PK-like)"/>
    <property type="match status" value="1"/>
</dbReference>
<dbReference type="PROSITE" id="PS00107">
    <property type="entry name" value="PROTEIN_KINASE_ATP"/>
    <property type="match status" value="1"/>
</dbReference>
<dbReference type="PROSITE" id="PS50011">
    <property type="entry name" value="PROTEIN_KINASE_DOM"/>
    <property type="match status" value="1"/>
</dbReference>
<dbReference type="PROSITE" id="PS00108">
    <property type="entry name" value="PROTEIN_KINASE_ST"/>
    <property type="match status" value="1"/>
</dbReference>
<accession>Q8VZD5</accession>
<accession>Q9LYJ6</accession>
<organism>
    <name type="scientific">Arabidopsis thaliana</name>
    <name type="common">Mouse-ear cress</name>
    <dbReference type="NCBI Taxonomy" id="3702"/>
    <lineage>
        <taxon>Eukaryota</taxon>
        <taxon>Viridiplantae</taxon>
        <taxon>Streptophyta</taxon>
        <taxon>Embryophyta</taxon>
        <taxon>Tracheophyta</taxon>
        <taxon>Spermatophyta</taxon>
        <taxon>Magnoliopsida</taxon>
        <taxon>eudicotyledons</taxon>
        <taxon>Gunneridae</taxon>
        <taxon>Pentapetalae</taxon>
        <taxon>rosids</taxon>
        <taxon>malvids</taxon>
        <taxon>Brassicales</taxon>
        <taxon>Brassicaceae</taxon>
        <taxon>Camelineae</taxon>
        <taxon>Arabidopsis</taxon>
    </lineage>
</organism>
<reference key="1">
    <citation type="journal article" date="2000" name="Nature">
        <title>Sequence and analysis of chromosome 5 of the plant Arabidopsis thaliana.</title>
        <authorList>
            <person name="Tabata S."/>
            <person name="Kaneko T."/>
            <person name="Nakamura Y."/>
            <person name="Kotani H."/>
            <person name="Kato T."/>
            <person name="Asamizu E."/>
            <person name="Miyajima N."/>
            <person name="Sasamoto S."/>
            <person name="Kimura T."/>
            <person name="Hosouchi T."/>
            <person name="Kawashima K."/>
            <person name="Kohara M."/>
            <person name="Matsumoto M."/>
            <person name="Matsuno A."/>
            <person name="Muraki A."/>
            <person name="Nakayama S."/>
            <person name="Nakazaki N."/>
            <person name="Naruo K."/>
            <person name="Okumura S."/>
            <person name="Shinpo S."/>
            <person name="Takeuchi C."/>
            <person name="Wada T."/>
            <person name="Watanabe A."/>
            <person name="Yamada M."/>
            <person name="Yasuda M."/>
            <person name="Sato S."/>
            <person name="de la Bastide M."/>
            <person name="Huang E."/>
            <person name="Spiegel L."/>
            <person name="Gnoj L."/>
            <person name="O'Shaughnessy A."/>
            <person name="Preston R."/>
            <person name="Habermann K."/>
            <person name="Murray J."/>
            <person name="Johnson D."/>
            <person name="Rohlfing T."/>
            <person name="Nelson J."/>
            <person name="Stoneking T."/>
            <person name="Pepin K."/>
            <person name="Spieth J."/>
            <person name="Sekhon M."/>
            <person name="Armstrong J."/>
            <person name="Becker M."/>
            <person name="Belter E."/>
            <person name="Cordum H."/>
            <person name="Cordes M."/>
            <person name="Courtney L."/>
            <person name="Courtney W."/>
            <person name="Dante M."/>
            <person name="Du H."/>
            <person name="Edwards J."/>
            <person name="Fryman J."/>
            <person name="Haakensen B."/>
            <person name="Lamar E."/>
            <person name="Latreille P."/>
            <person name="Leonard S."/>
            <person name="Meyer R."/>
            <person name="Mulvaney E."/>
            <person name="Ozersky P."/>
            <person name="Riley A."/>
            <person name="Strowmatt C."/>
            <person name="Wagner-McPherson C."/>
            <person name="Wollam A."/>
            <person name="Yoakum M."/>
            <person name="Bell M."/>
            <person name="Dedhia N."/>
            <person name="Parnell L."/>
            <person name="Shah R."/>
            <person name="Rodriguez M."/>
            <person name="Hoon See L."/>
            <person name="Vil D."/>
            <person name="Baker J."/>
            <person name="Kirchoff K."/>
            <person name="Toth K."/>
            <person name="King L."/>
            <person name="Bahret A."/>
            <person name="Miller B."/>
            <person name="Marra M.A."/>
            <person name="Martienssen R."/>
            <person name="McCombie W.R."/>
            <person name="Wilson R.K."/>
            <person name="Murphy G."/>
            <person name="Bancroft I."/>
            <person name="Volckaert G."/>
            <person name="Wambutt R."/>
            <person name="Duesterhoeft A."/>
            <person name="Stiekema W."/>
            <person name="Pohl T."/>
            <person name="Entian K.-D."/>
            <person name="Terryn N."/>
            <person name="Hartley N."/>
            <person name="Bent E."/>
            <person name="Johnson S."/>
            <person name="Langham S.-A."/>
            <person name="McCullagh B."/>
            <person name="Robben J."/>
            <person name="Grymonprez B."/>
            <person name="Zimmermann W."/>
            <person name="Ramsperger U."/>
            <person name="Wedler H."/>
            <person name="Balke K."/>
            <person name="Wedler E."/>
            <person name="Peters S."/>
            <person name="van Staveren M."/>
            <person name="Dirkse W."/>
            <person name="Mooijman P."/>
            <person name="Klein Lankhorst R."/>
            <person name="Weitzenegger T."/>
            <person name="Bothe G."/>
            <person name="Rose M."/>
            <person name="Hauf J."/>
            <person name="Berneiser S."/>
            <person name="Hempel S."/>
            <person name="Feldpausch M."/>
            <person name="Lamberth S."/>
            <person name="Villarroel R."/>
            <person name="Gielen J."/>
            <person name="Ardiles W."/>
            <person name="Bents O."/>
            <person name="Lemcke K."/>
            <person name="Kolesov G."/>
            <person name="Mayer K.F.X."/>
            <person name="Rudd S."/>
            <person name="Schoof H."/>
            <person name="Schueller C."/>
            <person name="Zaccaria P."/>
            <person name="Mewes H.-W."/>
            <person name="Bevan M."/>
            <person name="Fransz P.F."/>
        </authorList>
    </citation>
    <scope>NUCLEOTIDE SEQUENCE [LARGE SCALE GENOMIC DNA]</scope>
    <source>
        <strain>cv. Columbia</strain>
    </source>
</reference>
<reference key="2">
    <citation type="journal article" date="2017" name="Plant J.">
        <title>Araport11: a complete reannotation of the Arabidopsis thaliana reference genome.</title>
        <authorList>
            <person name="Cheng C.Y."/>
            <person name="Krishnakumar V."/>
            <person name="Chan A.P."/>
            <person name="Thibaud-Nissen F."/>
            <person name="Schobel S."/>
            <person name="Town C.D."/>
        </authorList>
    </citation>
    <scope>GENOME REANNOTATION</scope>
    <source>
        <strain>cv. Columbia</strain>
    </source>
</reference>
<reference key="3">
    <citation type="journal article" date="2003" name="Science">
        <title>Empirical analysis of transcriptional activity in the Arabidopsis genome.</title>
        <authorList>
            <person name="Yamada K."/>
            <person name="Lim J."/>
            <person name="Dale J.M."/>
            <person name="Chen H."/>
            <person name="Shinn P."/>
            <person name="Palm C.J."/>
            <person name="Southwick A.M."/>
            <person name="Wu H.C."/>
            <person name="Kim C.J."/>
            <person name="Nguyen M."/>
            <person name="Pham P.K."/>
            <person name="Cheuk R.F."/>
            <person name="Karlin-Newmann G."/>
            <person name="Liu S.X."/>
            <person name="Lam B."/>
            <person name="Sakano H."/>
            <person name="Wu T."/>
            <person name="Yu G."/>
            <person name="Miranda M."/>
            <person name="Quach H.L."/>
            <person name="Tripp M."/>
            <person name="Chang C.H."/>
            <person name="Lee J.M."/>
            <person name="Toriumi M.J."/>
            <person name="Chan M.M."/>
            <person name="Tang C.C."/>
            <person name="Onodera C.S."/>
            <person name="Deng J.M."/>
            <person name="Akiyama K."/>
            <person name="Ansari Y."/>
            <person name="Arakawa T."/>
            <person name="Banh J."/>
            <person name="Banno F."/>
            <person name="Bowser L."/>
            <person name="Brooks S.Y."/>
            <person name="Carninci P."/>
            <person name="Chao Q."/>
            <person name="Choy N."/>
            <person name="Enju A."/>
            <person name="Goldsmith A.D."/>
            <person name="Gurjal M."/>
            <person name="Hansen N.F."/>
            <person name="Hayashizaki Y."/>
            <person name="Johnson-Hopson C."/>
            <person name="Hsuan V.W."/>
            <person name="Iida K."/>
            <person name="Karnes M."/>
            <person name="Khan S."/>
            <person name="Koesema E."/>
            <person name="Ishida J."/>
            <person name="Jiang P.X."/>
            <person name="Jones T."/>
            <person name="Kawai J."/>
            <person name="Kamiya A."/>
            <person name="Meyers C."/>
            <person name="Nakajima M."/>
            <person name="Narusaka M."/>
            <person name="Seki M."/>
            <person name="Sakurai T."/>
            <person name="Satou M."/>
            <person name="Tamse R."/>
            <person name="Vaysberg M."/>
            <person name="Wallender E.K."/>
            <person name="Wong C."/>
            <person name="Yamamura Y."/>
            <person name="Yuan S."/>
            <person name="Shinozaki K."/>
            <person name="Davis R.W."/>
            <person name="Theologis A."/>
            <person name="Ecker J.R."/>
        </authorList>
    </citation>
    <scope>NUCLEOTIDE SEQUENCE [LARGE SCALE MRNA]</scope>
    <source>
        <strain>cv. Columbia</strain>
    </source>
</reference>
<reference key="4">
    <citation type="journal article" date="2017" name="Mol. Cell">
        <title>The F-box protein KIB1 mediates brassinosteroid-induced inactivation and degradation of GSK3-like kinases in Arabidopsis.</title>
        <authorList>
            <person name="Zhu J.-Y."/>
            <person name="Li Y."/>
            <person name="Cao D.-M."/>
            <person name="Yang H."/>
            <person name="Oh E."/>
            <person name="Bi Y."/>
            <person name="Zhu S."/>
            <person name="Wang Z.-Y."/>
        </authorList>
    </citation>
    <scope>INTERACTION WITH KIB1</scope>
    <source>
        <strain>cv. Columbia</strain>
        <strain>cv. Wassilewskija</strain>
    </source>
</reference>
<sequence length="410" mass="46074">MASVGTLPASSMATKQSNASICAEKLPEGINEMKIKDDKEMEAAVVDGNGTETGHIIVTTIGGKNGQPKQTISYMAERIVGQGSFGIVFQAKCLETGETVAIKKVLQDKRYKNRELQTMRLLDHPNVVSLKHCFFSTTEKDELYLNLVLEYVPETVYRVSKHYSRANQRMPIIYVKLYTYQICRALAYIHGGVGVCHRDIKPQNLLVNPHTHQVKLCDFGSAKVLVKGEPNISYICSRYYRAPELIFGATEYTTTIDIWSAGCVLAELLLGQPLFPGESGVDQLVEIIKVLGTPTREEIKCMNPNYTEFKFPQIKAHPWHKIFHKRTPPEAVDLVSRLLQYSPNLRSTAMEAIVHPFFDELRDPNTRLPNGRALPPLFNFKPQELKGASLELLSKLIPDHARKQCSFLAL</sequence>
<gene>
    <name type="primary">ASK5</name>
    <name evidence="7" type="synonym">SK13</name>
    <name evidence="9" type="ordered locus">At5g14640</name>
    <name evidence="10" type="ORF">T15N1.130</name>
</gene>
<protein>
    <recommendedName>
        <fullName>Shaggy-related protein kinase epsilon</fullName>
        <ecNumber>2.7.11.1</ecNumber>
    </recommendedName>
    <alternativeName>
        <fullName>ASK-epsilon</fullName>
    </alternativeName>
    <alternativeName>
        <fullName evidence="7">Shaggy-related protein kinase 13</fullName>
        <shortName evidence="7">AtSK13</shortName>
    </alternativeName>
</protein>
<comment type="function">
    <text evidence="1">May mediate extracellular signals to regulate transcription in differentiating cells.</text>
</comment>
<comment type="catalytic activity">
    <reaction>
        <text>L-seryl-[protein] + ATP = O-phospho-L-seryl-[protein] + ADP + H(+)</text>
        <dbReference type="Rhea" id="RHEA:17989"/>
        <dbReference type="Rhea" id="RHEA-COMP:9863"/>
        <dbReference type="Rhea" id="RHEA-COMP:11604"/>
        <dbReference type="ChEBI" id="CHEBI:15378"/>
        <dbReference type="ChEBI" id="CHEBI:29999"/>
        <dbReference type="ChEBI" id="CHEBI:30616"/>
        <dbReference type="ChEBI" id="CHEBI:83421"/>
        <dbReference type="ChEBI" id="CHEBI:456216"/>
        <dbReference type="EC" id="2.7.11.1"/>
    </reaction>
</comment>
<comment type="catalytic activity">
    <reaction>
        <text>L-threonyl-[protein] + ATP = O-phospho-L-threonyl-[protein] + ADP + H(+)</text>
        <dbReference type="Rhea" id="RHEA:46608"/>
        <dbReference type="Rhea" id="RHEA-COMP:11060"/>
        <dbReference type="Rhea" id="RHEA-COMP:11605"/>
        <dbReference type="ChEBI" id="CHEBI:15378"/>
        <dbReference type="ChEBI" id="CHEBI:30013"/>
        <dbReference type="ChEBI" id="CHEBI:30616"/>
        <dbReference type="ChEBI" id="CHEBI:61977"/>
        <dbReference type="ChEBI" id="CHEBI:456216"/>
        <dbReference type="EC" id="2.7.11.1"/>
    </reaction>
</comment>
<comment type="subunit">
    <text evidence="6">Binds to KIB1.</text>
</comment>
<comment type="PTM">
    <text evidence="1">Autophosphorylated mainly on threonine and serine residues.</text>
</comment>
<comment type="similarity">
    <text evidence="8">Belongs to the protein kinase superfamily. CMGC Ser/Thr protein kinase family. GSK-3 subfamily.</text>
</comment>
<comment type="sequence caution" evidence="8">
    <conflict type="erroneous gene model prediction">
        <sequence resource="EMBL-CDS" id="CAB87631"/>
    </conflict>
</comment>
<proteinExistence type="evidence at protein level"/>